<proteinExistence type="evidence at transcript level"/>
<protein>
    <recommendedName>
        <fullName>Leukocyte surface antigen CD47</fullName>
    </recommendedName>
    <alternativeName>
        <fullName>Integrin-associated protein</fullName>
        <shortName>IAP</shortName>
    </alternativeName>
    <cdAntigenName>CD47</cdAntigenName>
</protein>
<dbReference type="EMBL" id="CR857514">
    <property type="protein sequence ID" value="CAH89797.1"/>
    <property type="molecule type" value="mRNA"/>
</dbReference>
<dbReference type="RefSeq" id="NP_001124828.1">
    <property type="nucleotide sequence ID" value="NM_001131356.1"/>
</dbReference>
<dbReference type="SMR" id="Q5REL0"/>
<dbReference type="FunCoup" id="Q5REL0">
    <property type="interactions" value="624"/>
</dbReference>
<dbReference type="STRING" id="9601.ENSPPYP00000015180"/>
<dbReference type="GlyCosmos" id="Q5REL0">
    <property type="glycosylation" value="6 sites, No reported glycans"/>
</dbReference>
<dbReference type="GeneID" id="100171686"/>
<dbReference type="KEGG" id="pon:100171686"/>
<dbReference type="CTD" id="961"/>
<dbReference type="eggNOG" id="ENOG502RYTQ">
    <property type="taxonomic scope" value="Eukaryota"/>
</dbReference>
<dbReference type="InParanoid" id="Q5REL0"/>
<dbReference type="OrthoDB" id="9447188at2759"/>
<dbReference type="Proteomes" id="UP000001595">
    <property type="component" value="Unplaced"/>
</dbReference>
<dbReference type="GO" id="GO:0070062">
    <property type="term" value="C:extracellular exosome"/>
    <property type="evidence" value="ECO:0007669"/>
    <property type="project" value="TreeGrafter"/>
</dbReference>
<dbReference type="GO" id="GO:0005886">
    <property type="term" value="C:plasma membrane"/>
    <property type="evidence" value="ECO:0007669"/>
    <property type="project" value="UniProtKB-SubCell"/>
</dbReference>
<dbReference type="GO" id="GO:0070053">
    <property type="term" value="F:thrombospondin receptor activity"/>
    <property type="evidence" value="ECO:0007669"/>
    <property type="project" value="InterPro"/>
</dbReference>
<dbReference type="GO" id="GO:0007155">
    <property type="term" value="P:cell adhesion"/>
    <property type="evidence" value="ECO:0007669"/>
    <property type="project" value="UniProtKB-KW"/>
</dbReference>
<dbReference type="GO" id="GO:0022409">
    <property type="term" value="P:positive regulation of cell-cell adhesion"/>
    <property type="evidence" value="ECO:0007669"/>
    <property type="project" value="InterPro"/>
</dbReference>
<dbReference type="GO" id="GO:0050729">
    <property type="term" value="P:positive regulation of inflammatory response"/>
    <property type="evidence" value="ECO:0007669"/>
    <property type="project" value="InterPro"/>
</dbReference>
<dbReference type="GO" id="GO:0050766">
    <property type="term" value="P:positive regulation of phagocytosis"/>
    <property type="evidence" value="ECO:0007669"/>
    <property type="project" value="InterPro"/>
</dbReference>
<dbReference type="CDD" id="cd16090">
    <property type="entry name" value="IgV_CD47"/>
    <property type="match status" value="1"/>
</dbReference>
<dbReference type="FunFam" id="2.60.40.10:FF:000521">
    <property type="entry name" value="leukocyte surface antigen CD47"/>
    <property type="match status" value="1"/>
</dbReference>
<dbReference type="Gene3D" id="2.60.40.10">
    <property type="entry name" value="Immunoglobulins"/>
    <property type="match status" value="1"/>
</dbReference>
<dbReference type="InterPro" id="IPR006704">
    <property type="entry name" value="CD47"/>
</dbReference>
<dbReference type="InterPro" id="IPR013147">
    <property type="entry name" value="CD47-like_TM"/>
</dbReference>
<dbReference type="InterPro" id="IPR013270">
    <property type="entry name" value="CD47_Vset"/>
</dbReference>
<dbReference type="InterPro" id="IPR007110">
    <property type="entry name" value="Ig-like_dom"/>
</dbReference>
<dbReference type="InterPro" id="IPR036179">
    <property type="entry name" value="Ig-like_dom_sf"/>
</dbReference>
<dbReference type="InterPro" id="IPR013783">
    <property type="entry name" value="Ig-like_fold"/>
</dbReference>
<dbReference type="InterPro" id="IPR037805">
    <property type="entry name" value="IgV_CD47"/>
</dbReference>
<dbReference type="PANTHER" id="PTHR10613">
    <property type="entry name" value="LEUKOCYTE SURFACE ANTIGEN CD47"/>
    <property type="match status" value="1"/>
</dbReference>
<dbReference type="PANTHER" id="PTHR10613:SF0">
    <property type="entry name" value="LEUKOCYTE SURFACE ANTIGEN CD47"/>
    <property type="match status" value="1"/>
</dbReference>
<dbReference type="Pfam" id="PF04549">
    <property type="entry name" value="CD47"/>
    <property type="match status" value="1"/>
</dbReference>
<dbReference type="Pfam" id="PF08204">
    <property type="entry name" value="V-set_CD47"/>
    <property type="match status" value="1"/>
</dbReference>
<dbReference type="SUPFAM" id="SSF48726">
    <property type="entry name" value="Immunoglobulin"/>
    <property type="match status" value="1"/>
</dbReference>
<dbReference type="PROSITE" id="PS50835">
    <property type="entry name" value="IG_LIKE"/>
    <property type="match status" value="1"/>
</dbReference>
<gene>
    <name type="primary">CD47</name>
</gene>
<feature type="signal peptide" evidence="5">
    <location>
        <begin position="1"/>
        <end position="18"/>
    </location>
</feature>
<feature type="chain" id="PRO_0000042208" description="Leukocyte surface antigen CD47">
    <location>
        <begin position="19"/>
        <end position="323"/>
    </location>
</feature>
<feature type="topological domain" description="Extracellular" evidence="5">
    <location>
        <begin position="19"/>
        <end position="141"/>
    </location>
</feature>
<feature type="transmembrane region" description="Helical" evidence="5">
    <location>
        <begin position="142"/>
        <end position="162"/>
    </location>
</feature>
<feature type="topological domain" description="Cytoplasmic" evidence="5">
    <location>
        <begin position="163"/>
        <end position="176"/>
    </location>
</feature>
<feature type="transmembrane region" description="Helical" evidence="5">
    <location>
        <begin position="177"/>
        <end position="197"/>
    </location>
</feature>
<feature type="topological domain" description="Extracellular" evidence="5">
    <location>
        <begin position="198"/>
        <end position="207"/>
    </location>
</feature>
<feature type="transmembrane region" description="Helical" evidence="5">
    <location>
        <begin position="208"/>
        <end position="228"/>
    </location>
</feature>
<feature type="topological domain" description="Cytoplasmic" evidence="5">
    <location>
        <begin position="229"/>
        <end position="235"/>
    </location>
</feature>
<feature type="transmembrane region" description="Helical" evidence="5">
    <location>
        <begin position="236"/>
        <end position="256"/>
    </location>
</feature>
<feature type="topological domain" description="Extracellular" evidence="5">
    <location>
        <begin position="257"/>
        <end position="268"/>
    </location>
</feature>
<feature type="transmembrane region" description="Helical" evidence="5">
    <location>
        <begin position="269"/>
        <end position="289"/>
    </location>
</feature>
<feature type="topological domain" description="Cytoplasmic" evidence="5">
    <location>
        <begin position="290"/>
        <end position="323"/>
    </location>
</feature>
<feature type="domain" description="Ig-like V-type">
    <location>
        <begin position="19"/>
        <end position="127"/>
    </location>
</feature>
<feature type="modified residue" description="Pyrrolidone carboxylic acid" evidence="3 7">
    <location>
        <position position="19"/>
    </location>
</feature>
<feature type="modified residue" description="Phosphoserine" evidence="2">
    <location>
        <position position="89"/>
    </location>
</feature>
<feature type="glycosylation site" description="N-linked (GlcNAc...) asparagine" evidence="5">
    <location>
        <position position="23"/>
    </location>
</feature>
<feature type="glycosylation site" description="N-linked (GlcNAc...) asparagine" evidence="5">
    <location>
        <position position="34"/>
    </location>
</feature>
<feature type="glycosylation site" description="N-linked (GlcNAc...) asparagine" evidence="5">
    <location>
        <position position="50"/>
    </location>
</feature>
<feature type="glycosylation site" description="N-linked (GlcNAc...) asparagine" evidence="5">
    <location>
        <position position="73"/>
    </location>
</feature>
<feature type="glycosylation site" description="N-linked (GlcNAc...) asparagine" evidence="5">
    <location>
        <position position="111"/>
    </location>
</feature>
<feature type="glycosylation site" description="N-linked (GlcNAc...) asparagine" evidence="5">
    <location>
        <position position="206"/>
    </location>
</feature>
<feature type="disulfide bond" evidence="6">
    <location>
        <begin position="33"/>
        <end position="263"/>
    </location>
</feature>
<feature type="disulfide bond" evidence="6">
    <location>
        <begin position="41"/>
        <end position="114"/>
    </location>
</feature>
<sequence length="323" mass="35241">MWPLVAALLLGSACCGSAQLLFNKTKSVEFTFCNDTVVIPCFVTNMEAQNTTEVYVKWKFKGRDIYTFDGALNKSTVPTDFSSAKIEVSQLLKGDASLKMDKSDAVSHTGNYTCEVTELTREGETIIELKYRVVSWFSPNENILIVIFPIFAILLFWGQFGIKTLKYRSGGMDEKTIALLVAGLIITVIVIVGAILFVPGEYSLKNATGLGLIVTSTGILILLHYYVFSTAIGLNSFVIAILVIQVIAYILAVVGLSLCIAACIPMHGPLLISGLSILALAQLLGLVYMKFVASNQKTIQPPRKAVEEPLNAFKESKGMMNDE</sequence>
<comment type="function">
    <text evidence="2 3 4">Adhesive protein that mediates cell-to-cell interactions. Acts as a receptor for thrombospondin THBS1 and as modulator of integrin signaling through the activation of heterotrimeric G proteins. Involved in signal transduction, cardiovascular homeostasis, inflammation, apoptosis, angiogenesis, cellular self-renewal, and immunoregulation. Plays a role in modulating pulmonary endothelin EDN1 signaling (By similarity). Modulates nitrous oxide (NO) signaling, in response to THBS1, hence playing a role as a pressor agent, supporting blood pressure (By similarity). Plays an important role in memory formation and synaptic plasticity in the hippocampus (By similarity). Receptor for SIRPA, binding to which prevents maturation of immature dendritic cells and inhibits cytokine production by mature dendritic cells. Interaction with SIRPG mediates cell-cell adhesion, enhances superantigen-dependent T-cell-mediated proliferation and costimulates T-cell activation (By similarity). Positively modulates FAS-dependent apoptosis in T-cells, perhaps by enhancing FAS clustering (By similarity). Plays a role in suppressing angiogenesis and may be involved in metabolic dysregulation during normal aging (By similarity). In response to THBS1, negatively modulates wound healing. Inhibits stem cell self-renewal, in response to THBS1, probably by regulation of the stem cell transcription factors POU5F1/OCT4, SOX2, MYC/c-Myc and KLF4 (By similarity). May play a role in membrane transport and/or integrin dependent signal transduction (By similarity). May prevent premature elimination of red blood cells (By similarity).</text>
</comment>
<comment type="subunit">
    <text evidence="3">Monomer. Interacts with THBS1 (via the C-terminal domain). Interacts with SIRPA. Interacts with FAS/CD95; interaction may be enhanced by functional activation. Interacts with SIRPG, UBQLN1 and UBQLN2. May interact with fibrinogen.</text>
</comment>
<comment type="subcellular location">
    <subcellularLocation>
        <location evidence="1">Cell membrane</location>
        <topology evidence="1">Multi-pass membrane protein</topology>
    </subcellularLocation>
</comment>
<keyword id="KW-0130">Cell adhesion</keyword>
<keyword id="KW-1003">Cell membrane</keyword>
<keyword id="KW-1015">Disulfide bond</keyword>
<keyword id="KW-0325">Glycoprotein</keyword>
<keyword id="KW-0393">Immunoglobulin domain</keyword>
<keyword id="KW-0472">Membrane</keyword>
<keyword id="KW-0597">Phosphoprotein</keyword>
<keyword id="KW-0873">Pyrrolidone carboxylic acid</keyword>
<keyword id="KW-1185">Reference proteome</keyword>
<keyword id="KW-0732">Signal</keyword>
<keyword id="KW-0812">Transmembrane</keyword>
<keyword id="KW-1133">Transmembrane helix</keyword>
<name>CD47_PONAB</name>
<reference key="1">
    <citation type="submission" date="2004-11" db="EMBL/GenBank/DDBJ databases">
        <authorList>
            <consortium name="The German cDNA consortium"/>
        </authorList>
    </citation>
    <scope>NUCLEOTIDE SEQUENCE [LARGE SCALE MRNA]</scope>
    <source>
        <tissue>Brain cortex</tissue>
    </source>
</reference>
<evidence type="ECO:0000250" key="1"/>
<evidence type="ECO:0000250" key="2">
    <source>
        <dbReference type="UniProtKB" id="P97829"/>
    </source>
</evidence>
<evidence type="ECO:0000250" key="3">
    <source>
        <dbReference type="UniProtKB" id="Q08722"/>
    </source>
</evidence>
<evidence type="ECO:0000250" key="4">
    <source>
        <dbReference type="UniProtKB" id="Q61735"/>
    </source>
</evidence>
<evidence type="ECO:0000255" key="5"/>
<evidence type="ECO:0000255" key="6">
    <source>
        <dbReference type="PROSITE-ProRule" id="PRU00114"/>
    </source>
</evidence>
<evidence type="ECO:0000305" key="7"/>
<accession>Q5REL0</accession>
<organism>
    <name type="scientific">Pongo abelii</name>
    <name type="common">Sumatran orangutan</name>
    <name type="synonym">Pongo pygmaeus abelii</name>
    <dbReference type="NCBI Taxonomy" id="9601"/>
    <lineage>
        <taxon>Eukaryota</taxon>
        <taxon>Metazoa</taxon>
        <taxon>Chordata</taxon>
        <taxon>Craniata</taxon>
        <taxon>Vertebrata</taxon>
        <taxon>Euteleostomi</taxon>
        <taxon>Mammalia</taxon>
        <taxon>Eutheria</taxon>
        <taxon>Euarchontoglires</taxon>
        <taxon>Primates</taxon>
        <taxon>Haplorrhini</taxon>
        <taxon>Catarrhini</taxon>
        <taxon>Hominidae</taxon>
        <taxon>Pongo</taxon>
    </lineage>
</organism>